<gene>
    <name evidence="1" type="primary">rpoB</name>
    <name type="ordered locus">P9215_17541</name>
</gene>
<feature type="chain" id="PRO_1000067551" description="DNA-directed RNA polymerase subunit beta">
    <location>
        <begin position="1"/>
        <end position="1097"/>
    </location>
</feature>
<feature type="region of interest" description="Disordered" evidence="2">
    <location>
        <begin position="1072"/>
        <end position="1097"/>
    </location>
</feature>
<feature type="compositionally biased region" description="Polar residues" evidence="2">
    <location>
        <begin position="1077"/>
        <end position="1091"/>
    </location>
</feature>
<accession>A8G6Y6</accession>
<sequence>MSSSALQVAKTATYLPDLVEVQRASFKWFLEQGLIEELQNFSPISDYTGKLELHFIGEEYRLKRPRHDVEEAKRRDATFASQMYVTCRLINKETGEIKEQEVFIGELPLMTERGTFIINGAERVIVNQIVRSPGVYFKDELDKNGRRTYNASVIPNRGAWLKFETDKNNLLYVRVDKTRKINAHVLMRAMGLSDNDVVDKLRHPEFYQSSIESANDEGINSEDQALLELYKKLRPGEPPSVSGGQQLLHSRFFDPKRYDLGRVGRYKINKKLRLTVPDDVRTLTHEDVLSTIDYLINLELDIGGASLDDIDHLGNRRVRSVGELLQNQVRVGLNRLERIIKERMTVGETDSLTPAQLVNPKPLVAAIKEFFGSSQLSQFMDQTNPLAELTHKRRISALGPGGLTRERAGFAVRDIHPSHYGRLCPIETPEGPNAGLINSLATHARVNEYGFIETPFWEVNNGKVDKEGNPVYLSADLEDECRVAPGDVATDKEGNIIANLIPVRYRQDFEKVPPHQVDYVQLSPVQVISVATSLIPFLEHDDANRALMGSNMQRQAVPLLRPERPLVGTGLESQVARDSGMVPITKVNGIVSYVDANEIVVKDDHGNEHFHYLQKYQRSNQDTCLNQRPIVKIGDRVISGQVLADGSACEGGEIALGQNVLIAYMPWEGYNYEDAILVSERMVTDDLYTSVHIEKYEIEARQTKLGPEEITREIPNISEESLNNLDEMGIIRIGAFVESGDILVGKVTPKGESDQPPEEKLLRAIFGEKARDVRDNSLRVPKTEKGRVLDVRIYTREQGDELPPGANMVVRVYVAQRRKIQVGDKMAGRHGNKGIISRILPREDMPYLPDGTPVDIVLNPLGVPSRMNVGQVFELLMGWAASNLNCRVKVVPFDEMYGAEKSHQTVQAFLEEASKQPGKAWVYNPDDPGKLLLKDGRTGEPFDQPVAVGYSHFLKLVHLVDDKIHARSTGPYSLVTQQPLGGKAQQGGQRLGEMEVWALEAYGAAYTLQELLTVKSDDMQGRNEALNAIVKGKPIPRPGTPESFKVLMRELQSLGLDIGVYTDEGKEVDLMQDINPRRNTPSRPTYESLGTSEYEED</sequence>
<keyword id="KW-0240">DNA-directed RNA polymerase</keyword>
<keyword id="KW-0548">Nucleotidyltransferase</keyword>
<keyword id="KW-0804">Transcription</keyword>
<keyword id="KW-0808">Transferase</keyword>
<comment type="function">
    <text evidence="1">DNA-dependent RNA polymerase catalyzes the transcription of DNA into RNA using the four ribonucleoside triphosphates as substrates.</text>
</comment>
<comment type="catalytic activity">
    <reaction evidence="1">
        <text>RNA(n) + a ribonucleoside 5'-triphosphate = RNA(n+1) + diphosphate</text>
        <dbReference type="Rhea" id="RHEA:21248"/>
        <dbReference type="Rhea" id="RHEA-COMP:14527"/>
        <dbReference type="Rhea" id="RHEA-COMP:17342"/>
        <dbReference type="ChEBI" id="CHEBI:33019"/>
        <dbReference type="ChEBI" id="CHEBI:61557"/>
        <dbReference type="ChEBI" id="CHEBI:140395"/>
        <dbReference type="EC" id="2.7.7.6"/>
    </reaction>
</comment>
<comment type="subunit">
    <text evidence="1">In cyanobacteria the RNAP catalytic core is composed of 2 alpha, 1 beta, 1 beta', 1 gamma and 1 omega subunit. When a sigma factor is associated with the core the holoenzyme is formed, which can initiate transcription.</text>
</comment>
<comment type="similarity">
    <text evidence="1">Belongs to the RNA polymerase beta chain family.</text>
</comment>
<evidence type="ECO:0000255" key="1">
    <source>
        <dbReference type="HAMAP-Rule" id="MF_01321"/>
    </source>
</evidence>
<evidence type="ECO:0000256" key="2">
    <source>
        <dbReference type="SAM" id="MobiDB-lite"/>
    </source>
</evidence>
<organism>
    <name type="scientific">Prochlorococcus marinus (strain MIT 9215)</name>
    <dbReference type="NCBI Taxonomy" id="93060"/>
    <lineage>
        <taxon>Bacteria</taxon>
        <taxon>Bacillati</taxon>
        <taxon>Cyanobacteriota</taxon>
        <taxon>Cyanophyceae</taxon>
        <taxon>Synechococcales</taxon>
        <taxon>Prochlorococcaceae</taxon>
        <taxon>Prochlorococcus</taxon>
    </lineage>
</organism>
<dbReference type="EC" id="2.7.7.6" evidence="1"/>
<dbReference type="EMBL" id="CP000825">
    <property type="protein sequence ID" value="ABV51367.1"/>
    <property type="molecule type" value="Genomic_DNA"/>
</dbReference>
<dbReference type="RefSeq" id="WP_012008384.1">
    <property type="nucleotide sequence ID" value="NC_009840.1"/>
</dbReference>
<dbReference type="SMR" id="A8G6Y6"/>
<dbReference type="STRING" id="93060.P9215_17541"/>
<dbReference type="KEGG" id="pmh:P9215_17541"/>
<dbReference type="eggNOG" id="COG0085">
    <property type="taxonomic scope" value="Bacteria"/>
</dbReference>
<dbReference type="HOGENOM" id="CLU_000524_4_3_3"/>
<dbReference type="OrthoDB" id="9803954at2"/>
<dbReference type="Proteomes" id="UP000002014">
    <property type="component" value="Chromosome"/>
</dbReference>
<dbReference type="GO" id="GO:0000428">
    <property type="term" value="C:DNA-directed RNA polymerase complex"/>
    <property type="evidence" value="ECO:0007669"/>
    <property type="project" value="UniProtKB-KW"/>
</dbReference>
<dbReference type="GO" id="GO:0003677">
    <property type="term" value="F:DNA binding"/>
    <property type="evidence" value="ECO:0007669"/>
    <property type="project" value="UniProtKB-UniRule"/>
</dbReference>
<dbReference type="GO" id="GO:0003899">
    <property type="term" value="F:DNA-directed RNA polymerase activity"/>
    <property type="evidence" value="ECO:0007669"/>
    <property type="project" value="UniProtKB-UniRule"/>
</dbReference>
<dbReference type="GO" id="GO:0032549">
    <property type="term" value="F:ribonucleoside binding"/>
    <property type="evidence" value="ECO:0007669"/>
    <property type="project" value="InterPro"/>
</dbReference>
<dbReference type="GO" id="GO:0006351">
    <property type="term" value="P:DNA-templated transcription"/>
    <property type="evidence" value="ECO:0007669"/>
    <property type="project" value="UniProtKB-UniRule"/>
</dbReference>
<dbReference type="CDD" id="cd00653">
    <property type="entry name" value="RNA_pol_B_RPB2"/>
    <property type="match status" value="1"/>
</dbReference>
<dbReference type="FunFam" id="3.90.1800.10:FF:000001">
    <property type="entry name" value="DNA-directed RNA polymerase subunit beta"/>
    <property type="match status" value="1"/>
</dbReference>
<dbReference type="Gene3D" id="2.40.50.100">
    <property type="match status" value="1"/>
</dbReference>
<dbReference type="Gene3D" id="2.40.50.150">
    <property type="match status" value="1"/>
</dbReference>
<dbReference type="Gene3D" id="3.90.1100.10">
    <property type="match status" value="1"/>
</dbReference>
<dbReference type="Gene3D" id="2.30.150.10">
    <property type="entry name" value="DNA-directed RNA polymerase, beta subunit, external 1 domain"/>
    <property type="match status" value="1"/>
</dbReference>
<dbReference type="Gene3D" id="2.40.270.10">
    <property type="entry name" value="DNA-directed RNA polymerase, subunit 2, domain 6"/>
    <property type="match status" value="1"/>
</dbReference>
<dbReference type="Gene3D" id="3.90.1800.10">
    <property type="entry name" value="RNA polymerase alpha subunit dimerisation domain"/>
    <property type="match status" value="1"/>
</dbReference>
<dbReference type="Gene3D" id="3.90.1110.10">
    <property type="entry name" value="RNA polymerase Rpb2, domain 2"/>
    <property type="match status" value="1"/>
</dbReference>
<dbReference type="HAMAP" id="MF_01321">
    <property type="entry name" value="RNApol_bact_RpoB"/>
    <property type="match status" value="1"/>
</dbReference>
<dbReference type="InterPro" id="IPR042107">
    <property type="entry name" value="DNA-dir_RNA_pol_bsu_ext_1_sf"/>
</dbReference>
<dbReference type="InterPro" id="IPR019462">
    <property type="entry name" value="DNA-dir_RNA_pol_bsu_external_1"/>
</dbReference>
<dbReference type="InterPro" id="IPR015712">
    <property type="entry name" value="DNA-dir_RNA_pol_su2"/>
</dbReference>
<dbReference type="InterPro" id="IPR007120">
    <property type="entry name" value="DNA-dir_RNAP_su2_dom"/>
</dbReference>
<dbReference type="InterPro" id="IPR037033">
    <property type="entry name" value="DNA-dir_RNAP_su2_hyb_sf"/>
</dbReference>
<dbReference type="InterPro" id="IPR010243">
    <property type="entry name" value="RNA_pol_bsu_bac"/>
</dbReference>
<dbReference type="InterPro" id="IPR007121">
    <property type="entry name" value="RNA_pol_bsu_CS"/>
</dbReference>
<dbReference type="InterPro" id="IPR007644">
    <property type="entry name" value="RNA_pol_bsu_protrusion"/>
</dbReference>
<dbReference type="InterPro" id="IPR007642">
    <property type="entry name" value="RNA_pol_Rpb2_2"/>
</dbReference>
<dbReference type="InterPro" id="IPR037034">
    <property type="entry name" value="RNA_pol_Rpb2_2_sf"/>
</dbReference>
<dbReference type="InterPro" id="IPR007645">
    <property type="entry name" value="RNA_pol_Rpb2_3"/>
</dbReference>
<dbReference type="InterPro" id="IPR007641">
    <property type="entry name" value="RNA_pol_Rpb2_7"/>
</dbReference>
<dbReference type="InterPro" id="IPR014724">
    <property type="entry name" value="RNA_pol_RPB2_OB-fold"/>
</dbReference>
<dbReference type="NCBIfam" id="NF001616">
    <property type="entry name" value="PRK00405.1"/>
    <property type="match status" value="1"/>
</dbReference>
<dbReference type="NCBIfam" id="TIGR02013">
    <property type="entry name" value="rpoB"/>
    <property type="match status" value="1"/>
</dbReference>
<dbReference type="PANTHER" id="PTHR20856">
    <property type="entry name" value="DNA-DIRECTED RNA POLYMERASE I SUBUNIT 2"/>
    <property type="match status" value="1"/>
</dbReference>
<dbReference type="Pfam" id="PF04563">
    <property type="entry name" value="RNA_pol_Rpb2_1"/>
    <property type="match status" value="1"/>
</dbReference>
<dbReference type="Pfam" id="PF04561">
    <property type="entry name" value="RNA_pol_Rpb2_2"/>
    <property type="match status" value="1"/>
</dbReference>
<dbReference type="Pfam" id="PF04565">
    <property type="entry name" value="RNA_pol_Rpb2_3"/>
    <property type="match status" value="1"/>
</dbReference>
<dbReference type="Pfam" id="PF10385">
    <property type="entry name" value="RNA_pol_Rpb2_45"/>
    <property type="match status" value="1"/>
</dbReference>
<dbReference type="Pfam" id="PF00562">
    <property type="entry name" value="RNA_pol_Rpb2_6"/>
    <property type="match status" value="1"/>
</dbReference>
<dbReference type="Pfam" id="PF04560">
    <property type="entry name" value="RNA_pol_Rpb2_7"/>
    <property type="match status" value="1"/>
</dbReference>
<dbReference type="SUPFAM" id="SSF64484">
    <property type="entry name" value="beta and beta-prime subunits of DNA dependent RNA-polymerase"/>
    <property type="match status" value="1"/>
</dbReference>
<dbReference type="PROSITE" id="PS01166">
    <property type="entry name" value="RNA_POL_BETA"/>
    <property type="match status" value="1"/>
</dbReference>
<proteinExistence type="inferred from homology"/>
<reference key="1">
    <citation type="journal article" date="2007" name="PLoS Genet.">
        <title>Patterns and implications of gene gain and loss in the evolution of Prochlorococcus.</title>
        <authorList>
            <person name="Kettler G.C."/>
            <person name="Martiny A.C."/>
            <person name="Huang K."/>
            <person name="Zucker J."/>
            <person name="Coleman M.L."/>
            <person name="Rodrigue S."/>
            <person name="Chen F."/>
            <person name="Lapidus A."/>
            <person name="Ferriera S."/>
            <person name="Johnson J."/>
            <person name="Steglich C."/>
            <person name="Church G.M."/>
            <person name="Richardson P."/>
            <person name="Chisholm S.W."/>
        </authorList>
    </citation>
    <scope>NUCLEOTIDE SEQUENCE [LARGE SCALE GENOMIC DNA]</scope>
    <source>
        <strain>MIT 9215</strain>
    </source>
</reference>
<protein>
    <recommendedName>
        <fullName evidence="1">DNA-directed RNA polymerase subunit beta</fullName>
        <shortName evidence="1">RNAP subunit beta</shortName>
        <ecNumber evidence="1">2.7.7.6</ecNumber>
    </recommendedName>
    <alternativeName>
        <fullName evidence="1">RNA polymerase subunit beta</fullName>
    </alternativeName>
    <alternativeName>
        <fullName evidence="1">Transcriptase subunit beta</fullName>
    </alternativeName>
</protein>
<name>RPOB_PROM2</name>